<proteinExistence type="evidence at protein level"/>
<protein>
    <recommendedName>
        <fullName evidence="4">CAPA-Periviscerokinin-2</fullName>
        <shortName evidence="4">CAPA-PVK-2</shortName>
    </recommendedName>
</protein>
<organism>
    <name type="scientific">Tyrannophasma gladiator</name>
    <name type="common">Gladiator</name>
    <name type="synonym">Heel-walker</name>
    <dbReference type="NCBI Taxonomy" id="270861"/>
    <lineage>
        <taxon>Eukaryota</taxon>
        <taxon>Metazoa</taxon>
        <taxon>Ecdysozoa</taxon>
        <taxon>Arthropoda</taxon>
        <taxon>Hexapoda</taxon>
        <taxon>Insecta</taxon>
        <taxon>Pterygota</taxon>
        <taxon>Neoptera</taxon>
        <taxon>Polyneoptera</taxon>
        <taxon>Mantophasmatodea</taxon>
        <taxon>Mantophasmatodea incertae sedis</taxon>
        <taxon>Tyrannophasma</taxon>
    </lineage>
</organism>
<sequence length="19" mass="2048">SGLQFAVLDGQGFLPFPRV</sequence>
<feature type="peptide" id="PRO_0000421650" description="CAPA-Periviscerokinin-2" evidence="3">
    <location>
        <begin position="1"/>
        <end position="19"/>
    </location>
</feature>
<feature type="modified residue" description="Valine amide" evidence="3">
    <location>
        <position position="19"/>
    </location>
</feature>
<keyword id="KW-0027">Amidation</keyword>
<keyword id="KW-0903">Direct protein sequencing</keyword>
<keyword id="KW-0527">Neuropeptide</keyword>
<keyword id="KW-0964">Secreted</keyword>
<comment type="function">
    <text evidence="1">Mediates visceral muscle contractile activity (myotropic activity).</text>
</comment>
<comment type="subcellular location">
    <subcellularLocation>
        <location evidence="6">Secreted</location>
    </subcellularLocation>
</comment>
<comment type="similarity">
    <text evidence="2">Belongs to the periviscerokinin family.</text>
</comment>
<name>PVK2_TYRGL</name>
<reference evidence="5" key="1">
    <citation type="journal article" date="2012" name="Syst. Biol.">
        <title>Peptidomics-based phylogeny and biogeography of Mantophasmatodea (Hexapoda).</title>
        <authorList>
            <person name="Predel R."/>
            <person name="Neupert S."/>
            <person name="Huetteroth W."/>
            <person name="Kahnt J."/>
            <person name="Waidelich D."/>
            <person name="Roth S."/>
        </authorList>
    </citation>
    <scope>PROTEIN SEQUENCE</scope>
    <scope>AMIDATION AT VAL-19</scope>
    <source>
        <tissue evidence="3">Abdominal perisympathetic organs</tissue>
    </source>
</reference>
<dbReference type="GO" id="GO:0005576">
    <property type="term" value="C:extracellular region"/>
    <property type="evidence" value="ECO:0007669"/>
    <property type="project" value="UniProtKB-SubCell"/>
</dbReference>
<dbReference type="GO" id="GO:0007218">
    <property type="term" value="P:neuropeptide signaling pathway"/>
    <property type="evidence" value="ECO:0007669"/>
    <property type="project" value="UniProtKB-KW"/>
</dbReference>
<accession>B3A0H5</accession>
<evidence type="ECO:0000250" key="1">
    <source>
        <dbReference type="UniProtKB" id="P83923"/>
    </source>
</evidence>
<evidence type="ECO:0000255" key="2"/>
<evidence type="ECO:0000269" key="3">
    <source>
    </source>
</evidence>
<evidence type="ECO:0000303" key="4">
    <source>
    </source>
</evidence>
<evidence type="ECO:0000305" key="5"/>
<evidence type="ECO:0000305" key="6">
    <source>
    </source>
</evidence>